<name>SPP2_KLULA</name>
<reference key="1">
    <citation type="journal article" date="2004" name="Nature">
        <title>Genome evolution in yeasts.</title>
        <authorList>
            <person name="Dujon B."/>
            <person name="Sherman D."/>
            <person name="Fischer G."/>
            <person name="Durrens P."/>
            <person name="Casaregola S."/>
            <person name="Lafontaine I."/>
            <person name="de Montigny J."/>
            <person name="Marck C."/>
            <person name="Neuveglise C."/>
            <person name="Talla E."/>
            <person name="Goffard N."/>
            <person name="Frangeul L."/>
            <person name="Aigle M."/>
            <person name="Anthouard V."/>
            <person name="Babour A."/>
            <person name="Barbe V."/>
            <person name="Barnay S."/>
            <person name="Blanchin S."/>
            <person name="Beckerich J.-M."/>
            <person name="Beyne E."/>
            <person name="Bleykasten C."/>
            <person name="Boisrame A."/>
            <person name="Boyer J."/>
            <person name="Cattolico L."/>
            <person name="Confanioleri F."/>
            <person name="de Daruvar A."/>
            <person name="Despons L."/>
            <person name="Fabre E."/>
            <person name="Fairhead C."/>
            <person name="Ferry-Dumazet H."/>
            <person name="Groppi A."/>
            <person name="Hantraye F."/>
            <person name="Hennequin C."/>
            <person name="Jauniaux N."/>
            <person name="Joyet P."/>
            <person name="Kachouri R."/>
            <person name="Kerrest A."/>
            <person name="Koszul R."/>
            <person name="Lemaire M."/>
            <person name="Lesur I."/>
            <person name="Ma L."/>
            <person name="Muller H."/>
            <person name="Nicaud J.-M."/>
            <person name="Nikolski M."/>
            <person name="Oztas S."/>
            <person name="Ozier-Kalogeropoulos O."/>
            <person name="Pellenz S."/>
            <person name="Potier S."/>
            <person name="Richard G.-F."/>
            <person name="Straub M.-L."/>
            <person name="Suleau A."/>
            <person name="Swennen D."/>
            <person name="Tekaia F."/>
            <person name="Wesolowski-Louvel M."/>
            <person name="Westhof E."/>
            <person name="Wirth B."/>
            <person name="Zeniou-Meyer M."/>
            <person name="Zivanovic Y."/>
            <person name="Bolotin-Fukuhara M."/>
            <person name="Thierry A."/>
            <person name="Bouchier C."/>
            <person name="Caudron B."/>
            <person name="Scarpelli C."/>
            <person name="Gaillardin C."/>
            <person name="Weissenbach J."/>
            <person name="Wincker P."/>
            <person name="Souciet J.-L."/>
        </authorList>
    </citation>
    <scope>NUCLEOTIDE SEQUENCE [LARGE SCALE GENOMIC DNA]</scope>
    <source>
        <strain>ATCC 8585 / CBS 2359 / DSM 70799 / NBRC 1267 / NRRL Y-1140 / WM37</strain>
    </source>
</reference>
<feature type="chain" id="PRO_0000218524" description="Pre-mRNA-splicing factor SPP2">
    <location>
        <begin position="1"/>
        <end position="189"/>
    </location>
</feature>
<feature type="region of interest" description="Disordered" evidence="2">
    <location>
        <begin position="1"/>
        <end position="28"/>
    </location>
</feature>
<feature type="region of interest" description="Disordered" evidence="2">
    <location>
        <begin position="54"/>
        <end position="156"/>
    </location>
</feature>
<feature type="compositionally biased region" description="Basic residues" evidence="2">
    <location>
        <begin position="10"/>
        <end position="26"/>
    </location>
</feature>
<evidence type="ECO:0000250" key="1"/>
<evidence type="ECO:0000256" key="2">
    <source>
        <dbReference type="SAM" id="MobiDB-lite"/>
    </source>
</evidence>
<evidence type="ECO:0000305" key="3"/>
<proteinExistence type="inferred from homology"/>
<keyword id="KW-0507">mRNA processing</keyword>
<keyword id="KW-0508">mRNA splicing</keyword>
<keyword id="KW-0539">Nucleus</keyword>
<keyword id="KW-1185">Reference proteome</keyword>
<keyword id="KW-0747">Spliceosome</keyword>
<organism>
    <name type="scientific">Kluyveromyces lactis (strain ATCC 8585 / CBS 2359 / DSM 70799 / NBRC 1267 / NRRL Y-1140 / WM37)</name>
    <name type="common">Yeast</name>
    <name type="synonym">Candida sphaerica</name>
    <dbReference type="NCBI Taxonomy" id="284590"/>
    <lineage>
        <taxon>Eukaryota</taxon>
        <taxon>Fungi</taxon>
        <taxon>Dikarya</taxon>
        <taxon>Ascomycota</taxon>
        <taxon>Saccharomycotina</taxon>
        <taxon>Saccharomycetes</taxon>
        <taxon>Saccharomycetales</taxon>
        <taxon>Saccharomycetaceae</taxon>
        <taxon>Kluyveromyces</taxon>
    </lineage>
</organism>
<dbReference type="EMBL" id="CR382123">
    <property type="protein sequence ID" value="CAH01337.1"/>
    <property type="molecule type" value="Genomic_DNA"/>
</dbReference>
<dbReference type="RefSeq" id="XP_452486.1">
    <property type="nucleotide sequence ID" value="XM_452486.1"/>
</dbReference>
<dbReference type="FunCoup" id="Q6CUA3">
    <property type="interactions" value="90"/>
</dbReference>
<dbReference type="STRING" id="284590.Q6CUA3"/>
<dbReference type="PaxDb" id="284590-Q6CUA3"/>
<dbReference type="KEGG" id="kla:KLLA0_C06490g"/>
<dbReference type="eggNOG" id="ENOG502S8BR">
    <property type="taxonomic scope" value="Eukaryota"/>
</dbReference>
<dbReference type="HOGENOM" id="CLU_110336_0_0_1"/>
<dbReference type="InParanoid" id="Q6CUA3"/>
<dbReference type="OMA" id="SKIRITH"/>
<dbReference type="Proteomes" id="UP000000598">
    <property type="component" value="Chromosome C"/>
</dbReference>
<dbReference type="GO" id="GO:0005681">
    <property type="term" value="C:spliceosomal complex"/>
    <property type="evidence" value="ECO:0007669"/>
    <property type="project" value="UniProtKB-KW"/>
</dbReference>
<dbReference type="GO" id="GO:0000398">
    <property type="term" value="P:mRNA splicing, via spliceosome"/>
    <property type="evidence" value="ECO:0007669"/>
    <property type="project" value="InterPro"/>
</dbReference>
<dbReference type="InterPro" id="IPR045166">
    <property type="entry name" value="Spp2-like"/>
</dbReference>
<dbReference type="InterPro" id="IPR026822">
    <property type="entry name" value="Spp2/MOS2_G-patch"/>
</dbReference>
<dbReference type="PANTHER" id="PTHR15818">
    <property type="entry name" value="G PATCH AND KOW-CONTAINING"/>
    <property type="match status" value="1"/>
</dbReference>
<dbReference type="PANTHER" id="PTHR15818:SF2">
    <property type="entry name" value="G-PATCH DOMAIN AND KOW MOTIFS-CONTAINING PROTEIN"/>
    <property type="match status" value="1"/>
</dbReference>
<dbReference type="Pfam" id="PF12656">
    <property type="entry name" value="G-patch_2"/>
    <property type="match status" value="1"/>
</dbReference>
<sequence length="189" mass="20906">MNGISISLKSKNKVKKKSGTKKKKKPTVFGIADNDEKATEFKITSVEERKETIKKPLCITPTEPLRSSLNARPESGSLKSEDEQAVVFPEESESKFDFKGPSALRNNIPEKTNEEEYEEVPVEGFGTALLRGMGWDPSAENDSSSEKSTLLHEKPHPELVGIGAKLTTASNSLRTAFMPLIRRKKTANE</sequence>
<accession>Q6CUA3</accession>
<comment type="function">
    <text evidence="1">Involved in spliceosome maturation and the first step of pre-mRNA splicing.</text>
</comment>
<comment type="subunit">
    <text evidence="1">Associated with the spliceosome.</text>
</comment>
<comment type="subcellular location">
    <subcellularLocation>
        <location evidence="1">Nucleus</location>
    </subcellularLocation>
</comment>
<comment type="similarity">
    <text evidence="3">Belongs to the SPP2 family.</text>
</comment>
<gene>
    <name type="primary">SPP2</name>
    <name type="ordered locus">KLLA0C06490g</name>
</gene>
<protein>
    <recommendedName>
        <fullName>Pre-mRNA-splicing factor SPP2</fullName>
    </recommendedName>
</protein>